<proteinExistence type="inferred from homology"/>
<gene>
    <name evidence="1" type="primary">recA</name>
</gene>
<accession>Q9ZIQ0</accession>
<keyword id="KW-0067">ATP-binding</keyword>
<keyword id="KW-0963">Cytoplasm</keyword>
<keyword id="KW-0227">DNA damage</keyword>
<keyword id="KW-0233">DNA recombination</keyword>
<keyword id="KW-0234">DNA repair</keyword>
<keyword id="KW-0238">DNA-binding</keyword>
<keyword id="KW-0547">Nucleotide-binding</keyword>
<keyword id="KW-0742">SOS response</keyword>
<dbReference type="EMBL" id="AF022175">
    <property type="protein sequence ID" value="AAC64504.1"/>
    <property type="molecule type" value="Genomic_DNA"/>
</dbReference>
<dbReference type="RefSeq" id="WP_055036696.1">
    <property type="nucleotide sequence ID" value="NZ_AP014854.2"/>
</dbReference>
<dbReference type="SMR" id="Q9ZIQ0"/>
<dbReference type="STRING" id="1079.BVIR_1014"/>
<dbReference type="OrthoDB" id="9776733at2"/>
<dbReference type="GO" id="GO:0005829">
    <property type="term" value="C:cytosol"/>
    <property type="evidence" value="ECO:0007669"/>
    <property type="project" value="TreeGrafter"/>
</dbReference>
<dbReference type="GO" id="GO:0005524">
    <property type="term" value="F:ATP binding"/>
    <property type="evidence" value="ECO:0007669"/>
    <property type="project" value="UniProtKB-UniRule"/>
</dbReference>
<dbReference type="GO" id="GO:0016887">
    <property type="term" value="F:ATP hydrolysis activity"/>
    <property type="evidence" value="ECO:0007669"/>
    <property type="project" value="InterPro"/>
</dbReference>
<dbReference type="GO" id="GO:0140664">
    <property type="term" value="F:ATP-dependent DNA damage sensor activity"/>
    <property type="evidence" value="ECO:0007669"/>
    <property type="project" value="InterPro"/>
</dbReference>
<dbReference type="GO" id="GO:0003684">
    <property type="term" value="F:damaged DNA binding"/>
    <property type="evidence" value="ECO:0007669"/>
    <property type="project" value="UniProtKB-UniRule"/>
</dbReference>
<dbReference type="GO" id="GO:0003697">
    <property type="term" value="F:single-stranded DNA binding"/>
    <property type="evidence" value="ECO:0007669"/>
    <property type="project" value="UniProtKB-UniRule"/>
</dbReference>
<dbReference type="GO" id="GO:0006310">
    <property type="term" value="P:DNA recombination"/>
    <property type="evidence" value="ECO:0007669"/>
    <property type="project" value="UniProtKB-UniRule"/>
</dbReference>
<dbReference type="GO" id="GO:0006281">
    <property type="term" value="P:DNA repair"/>
    <property type="evidence" value="ECO:0007669"/>
    <property type="project" value="UniProtKB-UniRule"/>
</dbReference>
<dbReference type="GO" id="GO:0009432">
    <property type="term" value="P:SOS response"/>
    <property type="evidence" value="ECO:0007669"/>
    <property type="project" value="UniProtKB-UniRule"/>
</dbReference>
<dbReference type="CDD" id="cd00983">
    <property type="entry name" value="RecA"/>
    <property type="match status" value="1"/>
</dbReference>
<dbReference type="FunFam" id="3.40.50.300:FF:000087">
    <property type="entry name" value="Recombinase RecA"/>
    <property type="match status" value="1"/>
</dbReference>
<dbReference type="Gene3D" id="3.40.50.300">
    <property type="entry name" value="P-loop containing nucleotide triphosphate hydrolases"/>
    <property type="match status" value="1"/>
</dbReference>
<dbReference type="HAMAP" id="MF_00268">
    <property type="entry name" value="RecA"/>
    <property type="match status" value="1"/>
</dbReference>
<dbReference type="InterPro" id="IPR003593">
    <property type="entry name" value="AAA+_ATPase"/>
</dbReference>
<dbReference type="InterPro" id="IPR013765">
    <property type="entry name" value="DNA_recomb/repair_RecA"/>
</dbReference>
<dbReference type="InterPro" id="IPR020584">
    <property type="entry name" value="DNA_recomb/repair_RecA_CS"/>
</dbReference>
<dbReference type="InterPro" id="IPR027417">
    <property type="entry name" value="P-loop_NTPase"/>
</dbReference>
<dbReference type="InterPro" id="IPR049261">
    <property type="entry name" value="RecA-like_C"/>
</dbReference>
<dbReference type="InterPro" id="IPR049428">
    <property type="entry name" value="RecA-like_N"/>
</dbReference>
<dbReference type="InterPro" id="IPR020588">
    <property type="entry name" value="RecA_ATP-bd"/>
</dbReference>
<dbReference type="InterPro" id="IPR023400">
    <property type="entry name" value="RecA_C_sf"/>
</dbReference>
<dbReference type="InterPro" id="IPR020587">
    <property type="entry name" value="RecA_monomer-monomer_interface"/>
</dbReference>
<dbReference type="NCBIfam" id="TIGR02012">
    <property type="entry name" value="tigrfam_recA"/>
    <property type="match status" value="1"/>
</dbReference>
<dbReference type="PANTHER" id="PTHR45900:SF1">
    <property type="entry name" value="MITOCHONDRIAL DNA REPAIR PROTEIN RECA HOMOLOG-RELATED"/>
    <property type="match status" value="1"/>
</dbReference>
<dbReference type="PANTHER" id="PTHR45900">
    <property type="entry name" value="RECA"/>
    <property type="match status" value="1"/>
</dbReference>
<dbReference type="Pfam" id="PF00154">
    <property type="entry name" value="RecA"/>
    <property type="match status" value="1"/>
</dbReference>
<dbReference type="Pfam" id="PF21096">
    <property type="entry name" value="RecA_C"/>
    <property type="match status" value="1"/>
</dbReference>
<dbReference type="PRINTS" id="PR00142">
    <property type="entry name" value="RECA"/>
</dbReference>
<dbReference type="SMART" id="SM00382">
    <property type="entry name" value="AAA"/>
    <property type="match status" value="1"/>
</dbReference>
<dbReference type="SUPFAM" id="SSF52540">
    <property type="entry name" value="P-loop containing nucleoside triphosphate hydrolases"/>
    <property type="match status" value="1"/>
</dbReference>
<dbReference type="SUPFAM" id="SSF54752">
    <property type="entry name" value="RecA protein, C-terminal domain"/>
    <property type="match status" value="1"/>
</dbReference>
<dbReference type="PROSITE" id="PS00321">
    <property type="entry name" value="RECA_1"/>
    <property type="match status" value="1"/>
</dbReference>
<dbReference type="PROSITE" id="PS50162">
    <property type="entry name" value="RECA_2"/>
    <property type="match status" value="1"/>
</dbReference>
<dbReference type="PROSITE" id="PS50163">
    <property type="entry name" value="RECA_3"/>
    <property type="match status" value="1"/>
</dbReference>
<feature type="chain" id="PRO_0000122820" description="Protein RecA">
    <location>
        <begin position="1"/>
        <end position="348"/>
    </location>
</feature>
<feature type="binding site" evidence="1">
    <location>
        <begin position="64"/>
        <end position="71"/>
    </location>
    <ligand>
        <name>ATP</name>
        <dbReference type="ChEBI" id="CHEBI:30616"/>
    </ligand>
</feature>
<evidence type="ECO:0000255" key="1">
    <source>
        <dbReference type="HAMAP-Rule" id="MF_00268"/>
    </source>
</evidence>
<comment type="function">
    <text>Can catalyze the hydrolysis of ATP in the presence of single-stranded DNA, the ATP-dependent uptake of single-stranded DNA by duplex DNA, and the ATP-dependent hybridization of homologous single-stranded DNAs. It interacts with LexA causing its activation and leading to its autocatalytic cleavage.</text>
</comment>
<comment type="subcellular location">
    <subcellularLocation>
        <location evidence="1">Cytoplasm</location>
    </subcellularLocation>
</comment>
<comment type="similarity">
    <text evidence="1">Belongs to the RecA family.</text>
</comment>
<organism>
    <name type="scientific">Blastochloris viridis</name>
    <name type="common">Rhodopseudomonas viridis</name>
    <dbReference type="NCBI Taxonomy" id="1079"/>
    <lineage>
        <taxon>Bacteria</taxon>
        <taxon>Pseudomonadati</taxon>
        <taxon>Pseudomonadota</taxon>
        <taxon>Alphaproteobacteria</taxon>
        <taxon>Hyphomicrobiales</taxon>
        <taxon>Blastochloridaceae</taxon>
        <taxon>Blastochloris</taxon>
    </lineage>
</organism>
<sequence>MDKTKALDAALTQIERAFGKGSIMRLGKSGAALEVETISTGSLGLDIALGIGGLPRGRVVEIFGPESSGKTTLALHTVAEAQKKGGVCAFIDAEHALDPLYARKLGVNLDDLLISQPDAGEQALEIADTLVRSGAIDVLVVDSVAALVPRAELEGEMGDSQPGMQARLMSQALRKLTASISRSNCMVIFINQIRMKIGVMYGSPETTTGGNALKFYASVRLDIRRIGAIKERDEVVGNQTRVKVVKNKLAPPFKQVEFDIMYGEGISKAGELIDLGVKAGVVDKSGSWFSHDSQRIGQGRENVKGFLKGHPDVAGRIEAAIRQNAGLIAERILGSSEDSEDGEDAAEA</sequence>
<name>RECA_BLAVI</name>
<reference key="1">
    <citation type="journal article" date="1998" name="J. Bacteriol.">
        <title>Cloning, sequencing, and characterization of the recA gene from Rhodopseudomonas viridis and construction of a recA strain.</title>
        <authorList>
            <person name="Chen I.P."/>
            <person name="Michel H."/>
        </authorList>
    </citation>
    <scope>NUCLEOTIDE SEQUENCE [GENOMIC DNA]</scope>
    <source>
        <strain>ATCC 19567 / DSM 133 / F</strain>
    </source>
</reference>
<protein>
    <recommendedName>
        <fullName evidence="1">Protein RecA</fullName>
    </recommendedName>
    <alternativeName>
        <fullName evidence="1">Recombinase A</fullName>
    </alternativeName>
</protein>